<accession>A9R678</accession>
<evidence type="ECO:0000255" key="1">
    <source>
        <dbReference type="HAMAP-Rule" id="MF_00151"/>
    </source>
</evidence>
<protein>
    <recommendedName>
        <fullName evidence="1">Phosphopantetheine adenylyltransferase</fullName>
        <ecNumber evidence="1">2.7.7.3</ecNumber>
    </recommendedName>
    <alternativeName>
        <fullName evidence="1">Dephospho-CoA pyrophosphorylase</fullName>
    </alternativeName>
    <alternativeName>
        <fullName evidence="1">Pantetheine-phosphate adenylyltransferase</fullName>
        <shortName evidence="1">PPAT</shortName>
    </alternativeName>
</protein>
<reference key="1">
    <citation type="journal article" date="2010" name="J. Bacteriol.">
        <title>Genome sequence of the deep-rooted Yersinia pestis strain Angola reveals new insights into the evolution and pangenome of the plague bacterium.</title>
        <authorList>
            <person name="Eppinger M."/>
            <person name="Worsham P.L."/>
            <person name="Nikolich M.P."/>
            <person name="Riley D.R."/>
            <person name="Sebastian Y."/>
            <person name="Mou S."/>
            <person name="Achtman M."/>
            <person name="Lindler L.E."/>
            <person name="Ravel J."/>
        </authorList>
    </citation>
    <scope>NUCLEOTIDE SEQUENCE [LARGE SCALE GENOMIC DNA]</scope>
    <source>
        <strain>Angola</strain>
    </source>
</reference>
<gene>
    <name evidence="1" type="primary">coaD</name>
    <name type="ordered locus">YpAngola_A0059</name>
</gene>
<keyword id="KW-0067">ATP-binding</keyword>
<keyword id="KW-0173">Coenzyme A biosynthesis</keyword>
<keyword id="KW-0963">Cytoplasm</keyword>
<keyword id="KW-0460">Magnesium</keyword>
<keyword id="KW-0547">Nucleotide-binding</keyword>
<keyword id="KW-0548">Nucleotidyltransferase</keyword>
<keyword id="KW-0808">Transferase</keyword>
<feature type="chain" id="PRO_1000096863" description="Phosphopantetheine adenylyltransferase">
    <location>
        <begin position="1"/>
        <end position="159"/>
    </location>
</feature>
<feature type="binding site" evidence="1">
    <location>
        <begin position="10"/>
        <end position="11"/>
    </location>
    <ligand>
        <name>ATP</name>
        <dbReference type="ChEBI" id="CHEBI:30616"/>
    </ligand>
</feature>
<feature type="binding site" evidence="1">
    <location>
        <position position="10"/>
    </location>
    <ligand>
        <name>substrate</name>
    </ligand>
</feature>
<feature type="binding site" evidence="1">
    <location>
        <position position="18"/>
    </location>
    <ligand>
        <name>ATP</name>
        <dbReference type="ChEBI" id="CHEBI:30616"/>
    </ligand>
</feature>
<feature type="binding site" evidence="1">
    <location>
        <position position="42"/>
    </location>
    <ligand>
        <name>substrate</name>
    </ligand>
</feature>
<feature type="binding site" evidence="1">
    <location>
        <position position="74"/>
    </location>
    <ligand>
        <name>substrate</name>
    </ligand>
</feature>
<feature type="binding site" evidence="1">
    <location>
        <position position="88"/>
    </location>
    <ligand>
        <name>substrate</name>
    </ligand>
</feature>
<feature type="binding site" evidence="1">
    <location>
        <begin position="89"/>
        <end position="91"/>
    </location>
    <ligand>
        <name>ATP</name>
        <dbReference type="ChEBI" id="CHEBI:30616"/>
    </ligand>
</feature>
<feature type="binding site" evidence="1">
    <location>
        <position position="99"/>
    </location>
    <ligand>
        <name>ATP</name>
        <dbReference type="ChEBI" id="CHEBI:30616"/>
    </ligand>
</feature>
<feature type="binding site" evidence="1">
    <location>
        <begin position="124"/>
        <end position="130"/>
    </location>
    <ligand>
        <name>ATP</name>
        <dbReference type="ChEBI" id="CHEBI:30616"/>
    </ligand>
</feature>
<feature type="site" description="Transition state stabilizer" evidence="1">
    <location>
        <position position="18"/>
    </location>
</feature>
<name>COAD_YERPG</name>
<comment type="function">
    <text evidence="1">Reversibly transfers an adenylyl group from ATP to 4'-phosphopantetheine, yielding dephospho-CoA (dPCoA) and pyrophosphate.</text>
</comment>
<comment type="catalytic activity">
    <reaction evidence="1">
        <text>(R)-4'-phosphopantetheine + ATP + H(+) = 3'-dephospho-CoA + diphosphate</text>
        <dbReference type="Rhea" id="RHEA:19801"/>
        <dbReference type="ChEBI" id="CHEBI:15378"/>
        <dbReference type="ChEBI" id="CHEBI:30616"/>
        <dbReference type="ChEBI" id="CHEBI:33019"/>
        <dbReference type="ChEBI" id="CHEBI:57328"/>
        <dbReference type="ChEBI" id="CHEBI:61723"/>
        <dbReference type="EC" id="2.7.7.3"/>
    </reaction>
</comment>
<comment type="cofactor">
    <cofactor evidence="1">
        <name>Mg(2+)</name>
        <dbReference type="ChEBI" id="CHEBI:18420"/>
    </cofactor>
</comment>
<comment type="pathway">
    <text evidence="1">Cofactor biosynthesis; coenzyme A biosynthesis; CoA from (R)-pantothenate: step 4/5.</text>
</comment>
<comment type="subunit">
    <text evidence="1">Homohexamer.</text>
</comment>
<comment type="subcellular location">
    <subcellularLocation>
        <location evidence="1">Cytoplasm</location>
    </subcellularLocation>
</comment>
<comment type="similarity">
    <text evidence="1">Belongs to the bacterial CoaD family.</text>
</comment>
<organism>
    <name type="scientific">Yersinia pestis bv. Antiqua (strain Angola)</name>
    <dbReference type="NCBI Taxonomy" id="349746"/>
    <lineage>
        <taxon>Bacteria</taxon>
        <taxon>Pseudomonadati</taxon>
        <taxon>Pseudomonadota</taxon>
        <taxon>Gammaproteobacteria</taxon>
        <taxon>Enterobacterales</taxon>
        <taxon>Yersiniaceae</taxon>
        <taxon>Yersinia</taxon>
    </lineage>
</organism>
<sequence length="159" mass="17651">MITKAIYPGTFDPITNGHLDLVTRASAMFSHVILAIADSSSKKPMFTLDERVALAKKVTAPLKNVEVLGFSELMAEFAKKHNANILVRGLRSVSDFEYEWQLANMNRHLMPKLESVFLIPSEKWSFISSSLVKEVARHGGDITPFLPKPVTKALLAKLA</sequence>
<proteinExistence type="inferred from homology"/>
<dbReference type="EC" id="2.7.7.3" evidence="1"/>
<dbReference type="EMBL" id="CP000901">
    <property type="protein sequence ID" value="ABX88228.1"/>
    <property type="molecule type" value="Genomic_DNA"/>
</dbReference>
<dbReference type="RefSeq" id="WP_002208988.1">
    <property type="nucleotide sequence ID" value="NZ_CP009935.1"/>
</dbReference>
<dbReference type="SMR" id="A9R678"/>
<dbReference type="GeneID" id="57974537"/>
<dbReference type="KEGG" id="ypg:YpAngola_A0059"/>
<dbReference type="PATRIC" id="fig|349746.12.peg.1002"/>
<dbReference type="UniPathway" id="UPA00241">
    <property type="reaction ID" value="UER00355"/>
</dbReference>
<dbReference type="GO" id="GO:0005737">
    <property type="term" value="C:cytoplasm"/>
    <property type="evidence" value="ECO:0007669"/>
    <property type="project" value="UniProtKB-SubCell"/>
</dbReference>
<dbReference type="GO" id="GO:0005524">
    <property type="term" value="F:ATP binding"/>
    <property type="evidence" value="ECO:0007669"/>
    <property type="project" value="UniProtKB-KW"/>
</dbReference>
<dbReference type="GO" id="GO:0004595">
    <property type="term" value="F:pantetheine-phosphate adenylyltransferase activity"/>
    <property type="evidence" value="ECO:0007669"/>
    <property type="project" value="UniProtKB-UniRule"/>
</dbReference>
<dbReference type="GO" id="GO:0015937">
    <property type="term" value="P:coenzyme A biosynthetic process"/>
    <property type="evidence" value="ECO:0007669"/>
    <property type="project" value="UniProtKB-UniRule"/>
</dbReference>
<dbReference type="CDD" id="cd02163">
    <property type="entry name" value="PPAT"/>
    <property type="match status" value="1"/>
</dbReference>
<dbReference type="FunFam" id="3.40.50.620:FF:000012">
    <property type="entry name" value="Phosphopantetheine adenylyltransferase"/>
    <property type="match status" value="1"/>
</dbReference>
<dbReference type="Gene3D" id="3.40.50.620">
    <property type="entry name" value="HUPs"/>
    <property type="match status" value="1"/>
</dbReference>
<dbReference type="HAMAP" id="MF_00151">
    <property type="entry name" value="PPAT_bact"/>
    <property type="match status" value="1"/>
</dbReference>
<dbReference type="InterPro" id="IPR004821">
    <property type="entry name" value="Cyt_trans-like"/>
</dbReference>
<dbReference type="InterPro" id="IPR001980">
    <property type="entry name" value="PPAT"/>
</dbReference>
<dbReference type="InterPro" id="IPR014729">
    <property type="entry name" value="Rossmann-like_a/b/a_fold"/>
</dbReference>
<dbReference type="NCBIfam" id="TIGR01510">
    <property type="entry name" value="coaD_prev_kdtB"/>
    <property type="match status" value="1"/>
</dbReference>
<dbReference type="NCBIfam" id="TIGR00125">
    <property type="entry name" value="cyt_tran_rel"/>
    <property type="match status" value="1"/>
</dbReference>
<dbReference type="PANTHER" id="PTHR21342">
    <property type="entry name" value="PHOSPHOPANTETHEINE ADENYLYLTRANSFERASE"/>
    <property type="match status" value="1"/>
</dbReference>
<dbReference type="PANTHER" id="PTHR21342:SF1">
    <property type="entry name" value="PHOSPHOPANTETHEINE ADENYLYLTRANSFERASE"/>
    <property type="match status" value="1"/>
</dbReference>
<dbReference type="Pfam" id="PF01467">
    <property type="entry name" value="CTP_transf_like"/>
    <property type="match status" value="1"/>
</dbReference>
<dbReference type="PRINTS" id="PR01020">
    <property type="entry name" value="LPSBIOSNTHSS"/>
</dbReference>
<dbReference type="SUPFAM" id="SSF52374">
    <property type="entry name" value="Nucleotidylyl transferase"/>
    <property type="match status" value="1"/>
</dbReference>